<evidence type="ECO:0000255" key="1">
    <source>
        <dbReference type="HAMAP-Rule" id="MF_00229"/>
    </source>
</evidence>
<organism>
    <name type="scientific">Pseudomonas putida (strain ATCC 47054 / DSM 6125 / CFBP 8728 / NCIMB 11950 / KT2440)</name>
    <dbReference type="NCBI Taxonomy" id="160488"/>
    <lineage>
        <taxon>Bacteria</taxon>
        <taxon>Pseudomonadati</taxon>
        <taxon>Pseudomonadota</taxon>
        <taxon>Gammaproteobacteria</taxon>
        <taxon>Pseudomonadales</taxon>
        <taxon>Pseudomonadaceae</taxon>
        <taxon>Pseudomonas</taxon>
    </lineage>
</organism>
<comment type="catalytic activity">
    <reaction evidence="1">
        <text>L-histidine = trans-urocanate + NH4(+)</text>
        <dbReference type="Rhea" id="RHEA:21232"/>
        <dbReference type="ChEBI" id="CHEBI:17771"/>
        <dbReference type="ChEBI" id="CHEBI:28938"/>
        <dbReference type="ChEBI" id="CHEBI:57595"/>
        <dbReference type="EC" id="4.3.1.3"/>
    </reaction>
</comment>
<comment type="pathway">
    <text evidence="1">Amino-acid degradation; L-histidine degradation into L-glutamate; N-formimidoyl-L-glutamate from L-histidine: step 1/3.</text>
</comment>
<comment type="subcellular location">
    <subcellularLocation>
        <location evidence="1">Cytoplasm</location>
    </subcellularLocation>
</comment>
<comment type="PTM">
    <text evidence="1">Contains an active site 4-methylidene-imidazol-5-one (MIO), which is formed autocatalytically by cyclization and dehydration of residues Ala-Ser-Gly.</text>
</comment>
<comment type="similarity">
    <text evidence="1">Belongs to the PAL/histidase family.</text>
</comment>
<reference key="1">
    <citation type="journal article" date="2002" name="Environ. Microbiol.">
        <title>Complete genome sequence and comparative analysis of the metabolically versatile Pseudomonas putida KT2440.</title>
        <authorList>
            <person name="Nelson K.E."/>
            <person name="Weinel C."/>
            <person name="Paulsen I.T."/>
            <person name="Dodson R.J."/>
            <person name="Hilbert H."/>
            <person name="Martins dos Santos V.A.P."/>
            <person name="Fouts D.E."/>
            <person name="Gill S.R."/>
            <person name="Pop M."/>
            <person name="Holmes M."/>
            <person name="Brinkac L.M."/>
            <person name="Beanan M.J."/>
            <person name="DeBoy R.T."/>
            <person name="Daugherty S.C."/>
            <person name="Kolonay J.F."/>
            <person name="Madupu R."/>
            <person name="Nelson W.C."/>
            <person name="White O."/>
            <person name="Peterson J.D."/>
            <person name="Khouri H.M."/>
            <person name="Hance I."/>
            <person name="Chris Lee P."/>
            <person name="Holtzapple E.K."/>
            <person name="Scanlan D."/>
            <person name="Tran K."/>
            <person name="Moazzez A."/>
            <person name="Utterback T.R."/>
            <person name="Rizzo M."/>
            <person name="Lee K."/>
            <person name="Kosack D."/>
            <person name="Moestl D."/>
            <person name="Wedler H."/>
            <person name="Lauber J."/>
            <person name="Stjepandic D."/>
            <person name="Hoheisel J."/>
            <person name="Straetz M."/>
            <person name="Heim S."/>
            <person name="Kiewitz C."/>
            <person name="Eisen J.A."/>
            <person name="Timmis K.N."/>
            <person name="Duesterhoeft A."/>
            <person name="Tuemmler B."/>
            <person name="Fraser C.M."/>
        </authorList>
    </citation>
    <scope>NUCLEOTIDE SEQUENCE [LARGE SCALE GENOMIC DNA]</scope>
    <source>
        <strain>ATCC 47054 / DSM 6125 / CFBP 8728 / NCIMB 11950 / KT2440</strain>
    </source>
</reference>
<gene>
    <name evidence="1" type="primary">hutH</name>
    <name type="ordered locus">PP_5032</name>
</gene>
<keyword id="KW-0963">Cytoplasm</keyword>
<keyword id="KW-0369">Histidine metabolism</keyword>
<keyword id="KW-0456">Lyase</keyword>
<keyword id="KW-1185">Reference proteome</keyword>
<dbReference type="EC" id="4.3.1.3" evidence="1"/>
<dbReference type="EMBL" id="AE015451">
    <property type="protein sequence ID" value="AAN70597.1"/>
    <property type="molecule type" value="Genomic_DNA"/>
</dbReference>
<dbReference type="RefSeq" id="NP_747133.1">
    <property type="nucleotide sequence ID" value="NC_002947.4"/>
</dbReference>
<dbReference type="RefSeq" id="WP_010955589.1">
    <property type="nucleotide sequence ID" value="NZ_CP169744.1"/>
</dbReference>
<dbReference type="SMR" id="Q88CZ7"/>
<dbReference type="STRING" id="160488.PP_5032"/>
<dbReference type="PaxDb" id="160488-PP_5032"/>
<dbReference type="KEGG" id="ppu:PP_5032"/>
<dbReference type="PATRIC" id="fig|160488.4.peg.5373"/>
<dbReference type="eggNOG" id="COG2986">
    <property type="taxonomic scope" value="Bacteria"/>
</dbReference>
<dbReference type="HOGENOM" id="CLU_014801_4_0_6"/>
<dbReference type="OrthoDB" id="9806955at2"/>
<dbReference type="PhylomeDB" id="Q88CZ7"/>
<dbReference type="BioCyc" id="PPUT160488:G1G01-5377-MONOMER"/>
<dbReference type="UniPathway" id="UPA00379">
    <property type="reaction ID" value="UER00549"/>
</dbReference>
<dbReference type="Proteomes" id="UP000000556">
    <property type="component" value="Chromosome"/>
</dbReference>
<dbReference type="GO" id="GO:0005737">
    <property type="term" value="C:cytoplasm"/>
    <property type="evidence" value="ECO:0007669"/>
    <property type="project" value="UniProtKB-SubCell"/>
</dbReference>
<dbReference type="GO" id="GO:0004397">
    <property type="term" value="F:histidine ammonia-lyase activity"/>
    <property type="evidence" value="ECO:0007669"/>
    <property type="project" value="UniProtKB-UniRule"/>
</dbReference>
<dbReference type="GO" id="GO:0019556">
    <property type="term" value="P:L-histidine catabolic process to glutamate and formamide"/>
    <property type="evidence" value="ECO:0007669"/>
    <property type="project" value="UniProtKB-UniPathway"/>
</dbReference>
<dbReference type="GO" id="GO:0019557">
    <property type="term" value="P:L-histidine catabolic process to glutamate and formate"/>
    <property type="evidence" value="ECO:0007669"/>
    <property type="project" value="UniProtKB-UniPathway"/>
</dbReference>
<dbReference type="CDD" id="cd00332">
    <property type="entry name" value="PAL-HAL"/>
    <property type="match status" value="1"/>
</dbReference>
<dbReference type="FunFam" id="1.10.275.10:FF:000005">
    <property type="entry name" value="Histidine ammonia-lyase"/>
    <property type="match status" value="1"/>
</dbReference>
<dbReference type="FunFam" id="1.20.200.10:FF:000003">
    <property type="entry name" value="Histidine ammonia-lyase"/>
    <property type="match status" value="1"/>
</dbReference>
<dbReference type="Gene3D" id="1.20.200.10">
    <property type="entry name" value="Fumarase/aspartase (Central domain)"/>
    <property type="match status" value="1"/>
</dbReference>
<dbReference type="Gene3D" id="1.10.275.10">
    <property type="entry name" value="Fumarase/aspartase (N-terminal domain)"/>
    <property type="match status" value="1"/>
</dbReference>
<dbReference type="HAMAP" id="MF_00229">
    <property type="entry name" value="His_ammonia_lyase"/>
    <property type="match status" value="1"/>
</dbReference>
<dbReference type="InterPro" id="IPR001106">
    <property type="entry name" value="Aromatic_Lyase"/>
</dbReference>
<dbReference type="InterPro" id="IPR024083">
    <property type="entry name" value="Fumarase/histidase_N"/>
</dbReference>
<dbReference type="InterPro" id="IPR005921">
    <property type="entry name" value="HutH"/>
</dbReference>
<dbReference type="InterPro" id="IPR008948">
    <property type="entry name" value="L-Aspartase-like"/>
</dbReference>
<dbReference type="InterPro" id="IPR022313">
    <property type="entry name" value="Phe/His_NH3-lyase_AS"/>
</dbReference>
<dbReference type="NCBIfam" id="TIGR01225">
    <property type="entry name" value="hutH"/>
    <property type="match status" value="1"/>
</dbReference>
<dbReference type="NCBIfam" id="NF006871">
    <property type="entry name" value="PRK09367.1"/>
    <property type="match status" value="1"/>
</dbReference>
<dbReference type="PANTHER" id="PTHR10362">
    <property type="entry name" value="HISTIDINE AMMONIA-LYASE"/>
    <property type="match status" value="1"/>
</dbReference>
<dbReference type="Pfam" id="PF00221">
    <property type="entry name" value="Lyase_aromatic"/>
    <property type="match status" value="1"/>
</dbReference>
<dbReference type="SUPFAM" id="SSF48557">
    <property type="entry name" value="L-aspartase-like"/>
    <property type="match status" value="1"/>
</dbReference>
<dbReference type="PROSITE" id="PS00488">
    <property type="entry name" value="PAL_HISTIDASE"/>
    <property type="match status" value="1"/>
</dbReference>
<accession>Q88CZ7</accession>
<proteinExistence type="inferred from homology"/>
<name>HUTH_PSEPK</name>
<feature type="chain" id="PRO_0000161018" description="Histidine ammonia-lyase">
    <location>
        <begin position="1"/>
        <end position="510"/>
    </location>
</feature>
<feature type="modified residue" description="2,3-didehydroalanine (Ser)" evidence="1">
    <location>
        <position position="144"/>
    </location>
</feature>
<feature type="cross-link" description="5-imidazolinone (Ala-Gly)" evidence="1">
    <location>
        <begin position="143"/>
        <end position="145"/>
    </location>
</feature>
<sequence>MTELTLKPGTLTLAQLRAIHAAPVRLQLDASAAPAIDASVACVEQIIAEDRTAYGINTGFGLLASTRIASHDLENLQRSLVLSHAAGIGAPLDDDLVRLIMVLKINSLSRGFSGIRRKVIDALIALVNAEVYPHIPLKGSVGASGDLAPLAHMSLVLLGEGKARYKGQWLPATEALAIAGLEPLTLAAKEGLALLNGTQASTAYALRGLFQAEDLYAAAIACGGLSVEAALGSRSPFDARVHEVRGQRGQIDTAACFRDLLGDSSEVSLSHKNCDKVQDPYSLRCQPQVMGACLTQLRQAAEVLGIEANAVSDNPLVFAAEGDVISGGNFHAEPVAMAADNLALAIAEIGSLSERRISLMMDKHMSQLPPFLVENGGVNSGFMIAQVTAAALASENKALSHPHSVDSLPTSANQEDHVSMAPAAGKRLWEMAENTRGVLAIEWLGACQGLDLRKGLKTSAKLEQARQALRSEVPHYDRDRFFAPDIEKAVDLLAKGSLTGLLPAGVLPSL</sequence>
<protein>
    <recommendedName>
        <fullName evidence="1">Histidine ammonia-lyase</fullName>
        <shortName evidence="1">Histidase</shortName>
        <ecNumber evidence="1">4.3.1.3</ecNumber>
    </recommendedName>
</protein>